<evidence type="ECO:0000250" key="1">
    <source>
        <dbReference type="UniProtKB" id="O64743"/>
    </source>
</evidence>
<evidence type="ECO:0000250" key="2">
    <source>
        <dbReference type="UniProtKB" id="P30986"/>
    </source>
</evidence>
<evidence type="ECO:0000255" key="3"/>
<evidence type="ECO:0000255" key="4">
    <source>
        <dbReference type="PROSITE-ProRule" id="PRU00498"/>
    </source>
</evidence>
<evidence type="ECO:0000255" key="5">
    <source>
        <dbReference type="PROSITE-ProRule" id="PRU00718"/>
    </source>
</evidence>
<evidence type="ECO:0000303" key="6">
    <source>
    </source>
</evidence>
<evidence type="ECO:0000303" key="7">
    <source>
    </source>
</evidence>
<evidence type="ECO:0000305" key="8"/>
<protein>
    <recommendedName>
        <fullName evidence="7">Berberine bridge enzyme-like 19</fullName>
        <shortName evidence="7">AtBBE-like 19</shortName>
        <shortName evidence="7">AtBBE-like 20</shortName>
        <ecNumber evidence="1">1.1.1.-</ecNumber>
    </recommendedName>
    <alternativeName>
        <fullName>Reticuline oxidase-like protein</fullName>
        <ecNumber>1.21.-.-</ecNumber>
    </alternativeName>
</protein>
<sequence>MLTTPPRTFVSVPFFFFFLLFLSLPLSSFSQSNSVYNSFLKCFSDKTKSPQSQITDNVFSQTNPAFSSVLRAYIRNARFNTSSTLKPTIIITPRSESHVSAAVTCSKTLNFLLKIRSGGHDYDGLSYISDKPFFILDMSNIRDVSVDIASNSAWISAGATLGEVYYRIWEKSRVHGFPAGVCPTVGVGGHLSGGGYGNMVRKFGLSVDYVEDAKIVDVNGRVLDRKAMGEDLFWAITGGGGGSYGVVLGYKVKLVPVPSVVTVFRVEQYMDSGAVDMVHKWQSVGPKTDPNLFMRMLIQPVTRKKVKTVRASVVALFLGRADEVVALLSKEFPELGLKKENCSEMTWFQSALWWDNRLNATQVDPKVFLDRNLDTSSFGKRKSDYVATAIPKKGIESLFKKMIELGKIGLVFNPYGGKMAEVAVNAKPFPHRNKLFKIQYSVNWKENSAEIEKGYLNQAKVLYSFMTGFVSKNPRSSYFNYRDVDIGVNDHGANSYKEGEVYGRKYFGENFDRLVKIKTAVDPGNFFRNEQSIPTLKNEKGMLLPEPGKARRWSRVGGATVVATVVLHVF</sequence>
<proteinExistence type="evidence at protein level"/>
<comment type="cofactor">
    <cofactor evidence="2">
        <name>FAD</name>
        <dbReference type="ChEBI" id="CHEBI:57692"/>
    </cofactor>
    <text evidence="2">Binds 1 FAD per subunit in a bicovalent manner.</text>
</comment>
<comment type="subcellular location">
    <subcellularLocation>
        <location evidence="8">Secreted</location>
    </subcellularLocation>
    <subcellularLocation>
        <location evidence="1">Secreted</location>
        <location evidence="1">Cell wall</location>
    </subcellularLocation>
</comment>
<comment type="alternative products">
    <event type="alternative splicing"/>
    <isoform>
        <id>Q9SVG4-1</id>
        <name>1</name>
        <name>AtBBE-like 19</name>
        <sequence type="displayed"/>
    </isoform>
    <isoform>
        <id>Q9SVG4-2</id>
        <name>2</name>
        <name>AtBBE-like 20</name>
        <sequence type="described" ref="VSP_021389 VSP_021390"/>
    </isoform>
</comment>
<comment type="PTM">
    <text evidence="2">The FAD cofactor is bound via a bicovalent 6-S-cysteinyl, 8alpha-N1-histidyl FAD linkage.</text>
</comment>
<comment type="similarity">
    <text evidence="8">Belongs to the oxygen-dependent FAD-linked oxidoreductase family.</text>
</comment>
<gene>
    <name type="ordered locus">At4g20830</name>
    <name type="ORF">F21C20.180</name>
</gene>
<keyword id="KW-0025">Alternative splicing</keyword>
<keyword id="KW-0134">Cell wall</keyword>
<keyword id="KW-1015">Disulfide bond</keyword>
<keyword id="KW-0274">FAD</keyword>
<keyword id="KW-0285">Flavoprotein</keyword>
<keyword id="KW-0325">Glycoprotein</keyword>
<keyword id="KW-0547">Nucleotide-binding</keyword>
<keyword id="KW-0560">Oxidoreductase</keyword>
<keyword id="KW-1185">Reference proteome</keyword>
<keyword id="KW-0964">Secreted</keyword>
<keyword id="KW-0732">Signal</keyword>
<name>RETOL_ARATH</name>
<reference key="1">
    <citation type="journal article" date="1999" name="Nature">
        <title>Sequence and analysis of chromosome 4 of the plant Arabidopsis thaliana.</title>
        <authorList>
            <person name="Mayer K.F.X."/>
            <person name="Schueller C."/>
            <person name="Wambutt R."/>
            <person name="Murphy G."/>
            <person name="Volckaert G."/>
            <person name="Pohl T."/>
            <person name="Duesterhoeft A."/>
            <person name="Stiekema W."/>
            <person name="Entian K.-D."/>
            <person name="Terryn N."/>
            <person name="Harris B."/>
            <person name="Ansorge W."/>
            <person name="Brandt P."/>
            <person name="Grivell L.A."/>
            <person name="Rieger M."/>
            <person name="Weichselgartner M."/>
            <person name="de Simone V."/>
            <person name="Obermaier B."/>
            <person name="Mache R."/>
            <person name="Mueller M."/>
            <person name="Kreis M."/>
            <person name="Delseny M."/>
            <person name="Puigdomenech P."/>
            <person name="Watson M."/>
            <person name="Schmidtheini T."/>
            <person name="Reichert B."/>
            <person name="Portetelle D."/>
            <person name="Perez-Alonso M."/>
            <person name="Boutry M."/>
            <person name="Bancroft I."/>
            <person name="Vos P."/>
            <person name="Hoheisel J."/>
            <person name="Zimmermann W."/>
            <person name="Wedler H."/>
            <person name="Ridley P."/>
            <person name="Langham S.-A."/>
            <person name="McCullagh B."/>
            <person name="Bilham L."/>
            <person name="Robben J."/>
            <person name="van der Schueren J."/>
            <person name="Grymonprez B."/>
            <person name="Chuang Y.-J."/>
            <person name="Vandenbussche F."/>
            <person name="Braeken M."/>
            <person name="Weltjens I."/>
            <person name="Voet M."/>
            <person name="Bastiaens I."/>
            <person name="Aert R."/>
            <person name="Defoor E."/>
            <person name="Weitzenegger T."/>
            <person name="Bothe G."/>
            <person name="Ramsperger U."/>
            <person name="Hilbert H."/>
            <person name="Braun M."/>
            <person name="Holzer E."/>
            <person name="Brandt A."/>
            <person name="Peters S."/>
            <person name="van Staveren M."/>
            <person name="Dirkse W."/>
            <person name="Mooijman P."/>
            <person name="Klein Lankhorst R."/>
            <person name="Rose M."/>
            <person name="Hauf J."/>
            <person name="Koetter P."/>
            <person name="Berneiser S."/>
            <person name="Hempel S."/>
            <person name="Feldpausch M."/>
            <person name="Lamberth S."/>
            <person name="Van den Daele H."/>
            <person name="De Keyser A."/>
            <person name="Buysshaert C."/>
            <person name="Gielen J."/>
            <person name="Villarroel R."/>
            <person name="De Clercq R."/>
            <person name="van Montagu M."/>
            <person name="Rogers J."/>
            <person name="Cronin A."/>
            <person name="Quail M.A."/>
            <person name="Bray-Allen S."/>
            <person name="Clark L."/>
            <person name="Doggett J."/>
            <person name="Hall S."/>
            <person name="Kay M."/>
            <person name="Lennard N."/>
            <person name="McLay K."/>
            <person name="Mayes R."/>
            <person name="Pettett A."/>
            <person name="Rajandream M.A."/>
            <person name="Lyne M."/>
            <person name="Benes V."/>
            <person name="Rechmann S."/>
            <person name="Borkova D."/>
            <person name="Bloecker H."/>
            <person name="Scharfe M."/>
            <person name="Grimm M."/>
            <person name="Loehnert T.-H."/>
            <person name="Dose S."/>
            <person name="de Haan M."/>
            <person name="Maarse A.C."/>
            <person name="Schaefer M."/>
            <person name="Mueller-Auer S."/>
            <person name="Gabel C."/>
            <person name="Fuchs M."/>
            <person name="Fartmann B."/>
            <person name="Granderath K."/>
            <person name="Dauner D."/>
            <person name="Herzl A."/>
            <person name="Neumann S."/>
            <person name="Argiriou A."/>
            <person name="Vitale D."/>
            <person name="Liguori R."/>
            <person name="Piravandi E."/>
            <person name="Massenet O."/>
            <person name="Quigley F."/>
            <person name="Clabauld G."/>
            <person name="Muendlein A."/>
            <person name="Felber R."/>
            <person name="Schnabl S."/>
            <person name="Hiller R."/>
            <person name="Schmidt W."/>
            <person name="Lecharny A."/>
            <person name="Aubourg S."/>
            <person name="Chefdor F."/>
            <person name="Cooke R."/>
            <person name="Berger C."/>
            <person name="Monfort A."/>
            <person name="Casacuberta E."/>
            <person name="Gibbons T."/>
            <person name="Weber N."/>
            <person name="Vandenbol M."/>
            <person name="Bargues M."/>
            <person name="Terol J."/>
            <person name="Torres A."/>
            <person name="Perez-Perez A."/>
            <person name="Purnelle B."/>
            <person name="Bent E."/>
            <person name="Johnson S."/>
            <person name="Tacon D."/>
            <person name="Jesse T."/>
            <person name="Heijnen L."/>
            <person name="Schwarz S."/>
            <person name="Scholler P."/>
            <person name="Heber S."/>
            <person name="Francs P."/>
            <person name="Bielke C."/>
            <person name="Frishman D."/>
            <person name="Haase D."/>
            <person name="Lemcke K."/>
            <person name="Mewes H.-W."/>
            <person name="Stocker S."/>
            <person name="Zaccaria P."/>
            <person name="Bevan M."/>
            <person name="Wilson R.K."/>
            <person name="de la Bastide M."/>
            <person name="Habermann K."/>
            <person name="Parnell L."/>
            <person name="Dedhia N."/>
            <person name="Gnoj L."/>
            <person name="Schutz K."/>
            <person name="Huang E."/>
            <person name="Spiegel L."/>
            <person name="Sekhon M."/>
            <person name="Murray J."/>
            <person name="Sheet P."/>
            <person name="Cordes M."/>
            <person name="Abu-Threideh J."/>
            <person name="Stoneking T."/>
            <person name="Kalicki J."/>
            <person name="Graves T."/>
            <person name="Harmon G."/>
            <person name="Edwards J."/>
            <person name="Latreille P."/>
            <person name="Courtney L."/>
            <person name="Cloud J."/>
            <person name="Abbott A."/>
            <person name="Scott K."/>
            <person name="Johnson D."/>
            <person name="Minx P."/>
            <person name="Bentley D."/>
            <person name="Fulton B."/>
            <person name="Miller N."/>
            <person name="Greco T."/>
            <person name="Kemp K."/>
            <person name="Kramer J."/>
            <person name="Fulton L."/>
            <person name="Mardis E."/>
            <person name="Dante M."/>
            <person name="Pepin K."/>
            <person name="Hillier L.W."/>
            <person name="Nelson J."/>
            <person name="Spieth J."/>
            <person name="Ryan E."/>
            <person name="Andrews S."/>
            <person name="Geisel C."/>
            <person name="Layman D."/>
            <person name="Du H."/>
            <person name="Ali J."/>
            <person name="Berghoff A."/>
            <person name="Jones K."/>
            <person name="Drone K."/>
            <person name="Cotton M."/>
            <person name="Joshu C."/>
            <person name="Antonoiu B."/>
            <person name="Zidanic M."/>
            <person name="Strong C."/>
            <person name="Sun H."/>
            <person name="Lamar B."/>
            <person name="Yordan C."/>
            <person name="Ma P."/>
            <person name="Zhong J."/>
            <person name="Preston R."/>
            <person name="Vil D."/>
            <person name="Shekher M."/>
            <person name="Matero A."/>
            <person name="Shah R."/>
            <person name="Swaby I.K."/>
            <person name="O'Shaughnessy A."/>
            <person name="Rodriguez M."/>
            <person name="Hoffman J."/>
            <person name="Till S."/>
            <person name="Granat S."/>
            <person name="Shohdy N."/>
            <person name="Hasegawa A."/>
            <person name="Hameed A."/>
            <person name="Lodhi M."/>
            <person name="Johnson A."/>
            <person name="Chen E."/>
            <person name="Marra M.A."/>
            <person name="Martienssen R."/>
            <person name="McCombie W.R."/>
        </authorList>
    </citation>
    <scope>NUCLEOTIDE SEQUENCE [LARGE SCALE GENOMIC DNA]</scope>
    <source>
        <strain>cv. Columbia</strain>
    </source>
</reference>
<reference key="2">
    <citation type="journal article" date="2017" name="Plant J.">
        <title>Araport11: a complete reannotation of the Arabidopsis thaliana reference genome.</title>
        <authorList>
            <person name="Cheng C.Y."/>
            <person name="Krishnakumar V."/>
            <person name="Chan A.P."/>
            <person name="Thibaud-Nissen F."/>
            <person name="Schobel S."/>
            <person name="Town C.D."/>
        </authorList>
    </citation>
    <scope>GENOME REANNOTATION</scope>
    <source>
        <strain>cv. Columbia</strain>
    </source>
</reference>
<reference key="3">
    <citation type="journal article" date="2003" name="Science">
        <title>Empirical analysis of transcriptional activity in the Arabidopsis genome.</title>
        <authorList>
            <person name="Yamada K."/>
            <person name="Lim J."/>
            <person name="Dale J.M."/>
            <person name="Chen H."/>
            <person name="Shinn P."/>
            <person name="Palm C.J."/>
            <person name="Southwick A.M."/>
            <person name="Wu H.C."/>
            <person name="Kim C.J."/>
            <person name="Nguyen M."/>
            <person name="Pham P.K."/>
            <person name="Cheuk R.F."/>
            <person name="Karlin-Newmann G."/>
            <person name="Liu S.X."/>
            <person name="Lam B."/>
            <person name="Sakano H."/>
            <person name="Wu T."/>
            <person name="Yu G."/>
            <person name="Miranda M."/>
            <person name="Quach H.L."/>
            <person name="Tripp M."/>
            <person name="Chang C.H."/>
            <person name="Lee J.M."/>
            <person name="Toriumi M.J."/>
            <person name="Chan M.M."/>
            <person name="Tang C.C."/>
            <person name="Onodera C.S."/>
            <person name="Deng J.M."/>
            <person name="Akiyama K."/>
            <person name="Ansari Y."/>
            <person name="Arakawa T."/>
            <person name="Banh J."/>
            <person name="Banno F."/>
            <person name="Bowser L."/>
            <person name="Brooks S.Y."/>
            <person name="Carninci P."/>
            <person name="Chao Q."/>
            <person name="Choy N."/>
            <person name="Enju A."/>
            <person name="Goldsmith A.D."/>
            <person name="Gurjal M."/>
            <person name="Hansen N.F."/>
            <person name="Hayashizaki Y."/>
            <person name="Johnson-Hopson C."/>
            <person name="Hsuan V.W."/>
            <person name="Iida K."/>
            <person name="Karnes M."/>
            <person name="Khan S."/>
            <person name="Koesema E."/>
            <person name="Ishida J."/>
            <person name="Jiang P.X."/>
            <person name="Jones T."/>
            <person name="Kawai J."/>
            <person name="Kamiya A."/>
            <person name="Meyers C."/>
            <person name="Nakajima M."/>
            <person name="Narusaka M."/>
            <person name="Seki M."/>
            <person name="Sakurai T."/>
            <person name="Satou M."/>
            <person name="Tamse R."/>
            <person name="Vaysberg M."/>
            <person name="Wallender E.K."/>
            <person name="Wong C."/>
            <person name="Yamamura Y."/>
            <person name="Yuan S."/>
            <person name="Shinozaki K."/>
            <person name="Davis R.W."/>
            <person name="Theologis A."/>
            <person name="Ecker J.R."/>
        </authorList>
    </citation>
    <scope>NUCLEOTIDE SEQUENCE [LARGE SCALE MRNA] (ISOFORM 2)</scope>
    <source>
        <strain>cv. Columbia</strain>
    </source>
</reference>
<reference key="4">
    <citation type="journal article" date="2009" name="DNA Res.">
        <title>Analysis of multiple occurrences of alternative splicing events in Arabidopsis thaliana using novel sequenced full-length cDNAs.</title>
        <authorList>
            <person name="Iida K."/>
            <person name="Fukami-Kobayashi K."/>
            <person name="Toyoda A."/>
            <person name="Sakaki Y."/>
            <person name="Kobayashi M."/>
            <person name="Seki M."/>
            <person name="Shinozaki K."/>
        </authorList>
    </citation>
    <scope>NUCLEOTIDE SEQUENCE [LARGE SCALE MRNA] (ISOFORM 1)</scope>
    <source>
        <strain>cv. Columbia</strain>
        <tissue>Rosette leaf</tissue>
    </source>
</reference>
<reference key="5">
    <citation type="submission" date="1998-08" db="EMBL/GenBank/DDBJ databases">
        <title>Signal peptide selection derived cDNAs from Arabidopsis thaliana leaves and guard cells.</title>
        <authorList>
            <person name="Stracke R."/>
            <person name="Palme K."/>
        </authorList>
    </citation>
    <scope>NUCLEOTIDE SEQUENCE [LARGE SCALE MRNA] OF 1-175</scope>
</reference>
<reference key="6">
    <citation type="journal article" date="2003" name="Mol. Cell. Proteomics">
        <title>Large-scale analysis of in vivo phosphorylated membrane proteins by immobilized metal ion affinity chromatography and mass spectrometry.</title>
        <authorList>
            <person name="Nuehse T.S."/>
            <person name="Stensballe A."/>
            <person name="Jensen O.N."/>
            <person name="Peck S.C."/>
        </authorList>
    </citation>
    <scope>IDENTIFICATION BY MASS SPECTROMETRY [LARGE SCALE ANALYSIS]</scope>
    <source>
        <strain>cv. La-0</strain>
    </source>
</reference>
<reference key="7">
    <citation type="journal article" date="2015" name="J. Biol. Chem.">
        <title>Oxidation of monolignols by members of the berberine bridge enzyme family suggests a role in plant cell wall metabolism.</title>
        <authorList>
            <person name="Daniel B."/>
            <person name="Pavkov-Keller T."/>
            <person name="Steiner B."/>
            <person name="Dordic A."/>
            <person name="Gutmann A."/>
            <person name="Nidetzky B."/>
            <person name="Sensen C.W."/>
            <person name="van der Graaff E."/>
            <person name="Wallner S."/>
            <person name="Gruber K."/>
            <person name="Macheroux P."/>
        </authorList>
    </citation>
    <scope>GENE FAMILY</scope>
    <scope>NOMENCLATURE</scope>
</reference>
<dbReference type="EC" id="1.1.1.-" evidence="1"/>
<dbReference type="EC" id="1.21.-.-"/>
<dbReference type="EMBL" id="AL080254">
    <property type="protein sequence ID" value="CAB45849.1"/>
    <property type="molecule type" value="Genomic_DNA"/>
</dbReference>
<dbReference type="EMBL" id="AL161553">
    <property type="protein sequence ID" value="CAB79083.1"/>
    <property type="molecule type" value="Genomic_DNA"/>
</dbReference>
<dbReference type="EMBL" id="CP002687">
    <property type="protein sequence ID" value="AEE84365.1"/>
    <property type="molecule type" value="Genomic_DNA"/>
</dbReference>
<dbReference type="EMBL" id="CP002687">
    <property type="protein sequence ID" value="AEE84366.1"/>
    <property type="molecule type" value="Genomic_DNA"/>
</dbReference>
<dbReference type="EMBL" id="AY133533">
    <property type="protein sequence ID" value="AAM91363.1"/>
    <property type="molecule type" value="mRNA"/>
</dbReference>
<dbReference type="EMBL" id="AY062595">
    <property type="protein sequence ID" value="AAL32673.1"/>
    <property type="molecule type" value="mRNA"/>
</dbReference>
<dbReference type="EMBL" id="AF424621">
    <property type="protein sequence ID" value="AAL11614.1"/>
    <property type="molecule type" value="mRNA"/>
</dbReference>
<dbReference type="EMBL" id="AK316833">
    <property type="protein sequence ID" value="BAH19545.1"/>
    <property type="molecule type" value="mRNA"/>
</dbReference>
<dbReference type="EMBL" id="AF083756">
    <property type="protein sequence ID" value="AAN60314.1"/>
    <property type="molecule type" value="mRNA"/>
</dbReference>
<dbReference type="PIR" id="T10625">
    <property type="entry name" value="T10625"/>
</dbReference>
<dbReference type="RefSeq" id="NP_193815.2">
    <molecule id="Q9SVG4-1"/>
    <property type="nucleotide sequence ID" value="NM_118201.3"/>
</dbReference>
<dbReference type="RefSeq" id="NP_974580.1">
    <molecule id="Q9SVG4-2"/>
    <property type="nucleotide sequence ID" value="NM_202851.1"/>
</dbReference>
<dbReference type="SMR" id="Q9SVG4"/>
<dbReference type="BioGRID" id="13122">
    <property type="interactions" value="1"/>
</dbReference>
<dbReference type="FunCoup" id="Q9SVG4">
    <property type="interactions" value="27"/>
</dbReference>
<dbReference type="STRING" id="3702.Q9SVG4"/>
<dbReference type="GlyGen" id="Q9SVG4">
    <property type="glycosylation" value="4 sites"/>
</dbReference>
<dbReference type="SwissPalm" id="Q9SVG4"/>
<dbReference type="PaxDb" id="3702-AT4G20830.1"/>
<dbReference type="ProteomicsDB" id="236852">
    <molecule id="Q9SVG4-1"/>
</dbReference>
<dbReference type="EnsemblPlants" id="AT4G20830.1">
    <molecule id="Q9SVG4-1"/>
    <property type="protein sequence ID" value="AT4G20830.1"/>
    <property type="gene ID" value="AT4G20830"/>
</dbReference>
<dbReference type="EnsemblPlants" id="AT4G20830.2">
    <molecule id="Q9SVG4-2"/>
    <property type="protein sequence ID" value="AT4G20830.2"/>
    <property type="gene ID" value="AT4G20830"/>
</dbReference>
<dbReference type="GeneID" id="827831"/>
<dbReference type="Gramene" id="AT4G20830.1">
    <molecule id="Q9SVG4-1"/>
    <property type="protein sequence ID" value="AT4G20830.1"/>
    <property type="gene ID" value="AT4G20830"/>
</dbReference>
<dbReference type="Gramene" id="AT4G20830.2">
    <molecule id="Q9SVG4-2"/>
    <property type="protein sequence ID" value="AT4G20830.2"/>
    <property type="gene ID" value="AT4G20830"/>
</dbReference>
<dbReference type="KEGG" id="ath:AT4G20830"/>
<dbReference type="Araport" id="AT4G20830"/>
<dbReference type="TAIR" id="AT4G20830">
    <property type="gene designation" value="ATBBE19"/>
</dbReference>
<dbReference type="eggNOG" id="ENOG502QVGN">
    <property type="taxonomic scope" value="Eukaryota"/>
</dbReference>
<dbReference type="InParanoid" id="Q9SVG4"/>
<dbReference type="OMA" id="DTAFYYR"/>
<dbReference type="PhylomeDB" id="Q9SVG4"/>
<dbReference type="BioCyc" id="ARA:AT4G20830-MONOMER"/>
<dbReference type="CD-CODE" id="4299E36E">
    <property type="entry name" value="Nucleolus"/>
</dbReference>
<dbReference type="PRO" id="PR:Q9SVG4"/>
<dbReference type="Proteomes" id="UP000006548">
    <property type="component" value="Chromosome 4"/>
</dbReference>
<dbReference type="ExpressionAtlas" id="Q9SVG4">
    <property type="expression patterns" value="baseline and differential"/>
</dbReference>
<dbReference type="GO" id="GO:0048046">
    <property type="term" value="C:apoplast"/>
    <property type="evidence" value="ECO:0007005"/>
    <property type="project" value="TAIR"/>
</dbReference>
<dbReference type="GO" id="GO:0005829">
    <property type="term" value="C:cytosol"/>
    <property type="evidence" value="ECO:0007005"/>
    <property type="project" value="TAIR"/>
</dbReference>
<dbReference type="GO" id="GO:0005739">
    <property type="term" value="C:mitochondrion"/>
    <property type="evidence" value="ECO:0007005"/>
    <property type="project" value="TAIR"/>
</dbReference>
<dbReference type="GO" id="GO:0009505">
    <property type="term" value="C:plant-type cell wall"/>
    <property type="evidence" value="ECO:0007005"/>
    <property type="project" value="TAIR"/>
</dbReference>
<dbReference type="GO" id="GO:0005886">
    <property type="term" value="C:plasma membrane"/>
    <property type="evidence" value="ECO:0007005"/>
    <property type="project" value="TAIR"/>
</dbReference>
<dbReference type="GO" id="GO:0009506">
    <property type="term" value="C:plasmodesma"/>
    <property type="evidence" value="ECO:0007005"/>
    <property type="project" value="TAIR"/>
</dbReference>
<dbReference type="GO" id="GO:0005773">
    <property type="term" value="C:vacuole"/>
    <property type="evidence" value="ECO:0007005"/>
    <property type="project" value="TAIR"/>
</dbReference>
<dbReference type="GO" id="GO:0071949">
    <property type="term" value="F:FAD binding"/>
    <property type="evidence" value="ECO:0007669"/>
    <property type="project" value="InterPro"/>
</dbReference>
<dbReference type="GO" id="GO:0016899">
    <property type="term" value="F:oxidoreductase activity, acting on the CH-OH group of donors, oxygen as acceptor"/>
    <property type="evidence" value="ECO:0000314"/>
    <property type="project" value="TAIR"/>
</dbReference>
<dbReference type="GO" id="GO:0050832">
    <property type="term" value="P:defense response to fungus"/>
    <property type="evidence" value="ECO:0000315"/>
    <property type="project" value="TAIR"/>
</dbReference>
<dbReference type="GO" id="GO:0006979">
    <property type="term" value="P:response to oxidative stress"/>
    <property type="evidence" value="ECO:0000270"/>
    <property type="project" value="TAIR"/>
</dbReference>
<dbReference type="FunFam" id="3.30.43.10:FF:000004">
    <property type="entry name" value="Berberine bridge enzyme-like 15"/>
    <property type="match status" value="1"/>
</dbReference>
<dbReference type="Gene3D" id="3.30.465.10">
    <property type="match status" value="1"/>
</dbReference>
<dbReference type="Gene3D" id="3.40.462.20">
    <property type="match status" value="1"/>
</dbReference>
<dbReference type="Gene3D" id="3.30.43.10">
    <property type="entry name" value="Uridine Diphospho-n-acetylenolpyruvylglucosamine Reductase, domain 2"/>
    <property type="match status" value="1"/>
</dbReference>
<dbReference type="InterPro" id="IPR012951">
    <property type="entry name" value="BBE"/>
</dbReference>
<dbReference type="InterPro" id="IPR016166">
    <property type="entry name" value="FAD-bd_PCMH"/>
</dbReference>
<dbReference type="InterPro" id="IPR036318">
    <property type="entry name" value="FAD-bd_PCMH-like_sf"/>
</dbReference>
<dbReference type="InterPro" id="IPR016167">
    <property type="entry name" value="FAD-bd_PCMH_sub1"/>
</dbReference>
<dbReference type="InterPro" id="IPR016169">
    <property type="entry name" value="FAD-bd_PCMH_sub2"/>
</dbReference>
<dbReference type="InterPro" id="IPR006094">
    <property type="entry name" value="Oxid_FAD_bind_N"/>
</dbReference>
<dbReference type="PANTHER" id="PTHR32448">
    <property type="entry name" value="OS08G0158400 PROTEIN"/>
    <property type="match status" value="1"/>
</dbReference>
<dbReference type="Pfam" id="PF08031">
    <property type="entry name" value="BBE"/>
    <property type="match status" value="1"/>
</dbReference>
<dbReference type="Pfam" id="PF01565">
    <property type="entry name" value="FAD_binding_4"/>
    <property type="match status" value="1"/>
</dbReference>
<dbReference type="SUPFAM" id="SSF56176">
    <property type="entry name" value="FAD-binding/transporter-associated domain-like"/>
    <property type="match status" value="1"/>
</dbReference>
<dbReference type="PROSITE" id="PS51387">
    <property type="entry name" value="FAD_PCMH"/>
    <property type="match status" value="1"/>
</dbReference>
<accession>Q9SVG4</accession>
<accession>B9DFM8</accession>
<accession>Q3E9Y2</accession>
<accession>Q8H7B5</accession>
<organism>
    <name type="scientific">Arabidopsis thaliana</name>
    <name type="common">Mouse-ear cress</name>
    <dbReference type="NCBI Taxonomy" id="3702"/>
    <lineage>
        <taxon>Eukaryota</taxon>
        <taxon>Viridiplantae</taxon>
        <taxon>Streptophyta</taxon>
        <taxon>Embryophyta</taxon>
        <taxon>Tracheophyta</taxon>
        <taxon>Spermatophyta</taxon>
        <taxon>Magnoliopsida</taxon>
        <taxon>eudicotyledons</taxon>
        <taxon>Gunneridae</taxon>
        <taxon>Pentapetalae</taxon>
        <taxon>rosids</taxon>
        <taxon>malvids</taxon>
        <taxon>Brassicales</taxon>
        <taxon>Brassicaceae</taxon>
        <taxon>Camelineae</taxon>
        <taxon>Arabidopsis</taxon>
    </lineage>
</organism>
<feature type="signal peptide" evidence="3">
    <location>
        <begin position="1"/>
        <end position="30"/>
    </location>
</feature>
<feature type="chain" id="PRO_0000259448" description="Berberine bridge enzyme-like 19">
    <location>
        <begin position="31"/>
        <end position="570"/>
    </location>
</feature>
<feature type="domain" description="FAD-binding PCMH-type" evidence="5">
    <location>
        <begin position="83"/>
        <end position="257"/>
    </location>
</feature>
<feature type="glycosylation site" description="N-linked (GlcNAc...) asparagine" evidence="4">
    <location>
        <position position="80"/>
    </location>
</feature>
<feature type="glycosylation site" description="N-linked (GlcNAc...) asparagine" evidence="4">
    <location>
        <position position="341"/>
    </location>
</feature>
<feature type="glycosylation site" description="N-linked (GlcNAc...) asparagine" evidence="4">
    <location>
        <position position="359"/>
    </location>
</feature>
<feature type="disulfide bond" evidence="1">
    <location>
        <begin position="42"/>
        <end position="105"/>
    </location>
</feature>
<feature type="cross-link" description="6-(S-cysteinyl)-8alpha-(pros-histidyl)-FAD (His-Cys)" evidence="2">
    <location>
        <begin position="120"/>
        <end position="182"/>
    </location>
</feature>
<feature type="splice variant" id="VSP_021389" description="In isoform 2." evidence="6">
    <original>NEK</original>
    <variation>SKA</variation>
    <location>
        <begin position="538"/>
        <end position="540"/>
    </location>
</feature>
<feature type="splice variant" id="VSP_021390" description="In isoform 2." evidence="6">
    <location>
        <begin position="541"/>
        <end position="570"/>
    </location>
</feature>
<feature type="sequence conflict" description="In Ref. 5; AAN60314." evidence="8" ref="5">
    <location>
        <position position="14"/>
    </location>
</feature>
<feature type="sequence conflict" description="In Ref. 5; AAN60314." evidence="8" ref="5">
    <original>D</original>
    <variation>E</variation>
    <location>
        <position position="45"/>
    </location>
</feature>